<dbReference type="EMBL" id="CP000350">
    <property type="protein sequence ID" value="ABJ76708.1"/>
    <property type="molecule type" value="Genomic_DNA"/>
</dbReference>
<dbReference type="RefSeq" id="WP_011671940.1">
    <property type="nucleotide sequence ID" value="NC_008510.1"/>
</dbReference>
<dbReference type="SMR" id="Q04QW2"/>
<dbReference type="KEGG" id="lbj:LBJ_2225"/>
<dbReference type="HOGENOM" id="CLU_004131_4_2_12"/>
<dbReference type="Proteomes" id="UP000000656">
    <property type="component" value="Chromosome 1"/>
</dbReference>
<dbReference type="GO" id="GO:0032300">
    <property type="term" value="C:mismatch repair complex"/>
    <property type="evidence" value="ECO:0007669"/>
    <property type="project" value="InterPro"/>
</dbReference>
<dbReference type="GO" id="GO:0005524">
    <property type="term" value="F:ATP binding"/>
    <property type="evidence" value="ECO:0007669"/>
    <property type="project" value="InterPro"/>
</dbReference>
<dbReference type="GO" id="GO:0016887">
    <property type="term" value="F:ATP hydrolysis activity"/>
    <property type="evidence" value="ECO:0007669"/>
    <property type="project" value="InterPro"/>
</dbReference>
<dbReference type="GO" id="GO:0140664">
    <property type="term" value="F:ATP-dependent DNA damage sensor activity"/>
    <property type="evidence" value="ECO:0007669"/>
    <property type="project" value="InterPro"/>
</dbReference>
<dbReference type="GO" id="GO:0030983">
    <property type="term" value="F:mismatched DNA binding"/>
    <property type="evidence" value="ECO:0007669"/>
    <property type="project" value="InterPro"/>
</dbReference>
<dbReference type="GO" id="GO:0006298">
    <property type="term" value="P:mismatch repair"/>
    <property type="evidence" value="ECO:0007669"/>
    <property type="project" value="UniProtKB-UniRule"/>
</dbReference>
<dbReference type="CDD" id="cd16926">
    <property type="entry name" value="HATPase_MutL-MLH-PMS-like"/>
    <property type="match status" value="1"/>
</dbReference>
<dbReference type="CDD" id="cd00782">
    <property type="entry name" value="MutL_Trans"/>
    <property type="match status" value="1"/>
</dbReference>
<dbReference type="FunFam" id="3.30.565.10:FF:000003">
    <property type="entry name" value="DNA mismatch repair endonuclease MutL"/>
    <property type="match status" value="1"/>
</dbReference>
<dbReference type="Gene3D" id="3.30.230.10">
    <property type="match status" value="1"/>
</dbReference>
<dbReference type="Gene3D" id="3.30.565.10">
    <property type="entry name" value="Histidine kinase-like ATPase, C-terminal domain"/>
    <property type="match status" value="1"/>
</dbReference>
<dbReference type="Gene3D" id="3.30.1540.20">
    <property type="entry name" value="MutL, C-terminal domain, dimerisation subdomain"/>
    <property type="match status" value="1"/>
</dbReference>
<dbReference type="Gene3D" id="3.30.1370.100">
    <property type="entry name" value="MutL, C-terminal domain, regulatory subdomain"/>
    <property type="match status" value="1"/>
</dbReference>
<dbReference type="HAMAP" id="MF_00149">
    <property type="entry name" value="DNA_mis_repair"/>
    <property type="match status" value="1"/>
</dbReference>
<dbReference type="InterPro" id="IPR014762">
    <property type="entry name" value="DNA_mismatch_repair_CS"/>
</dbReference>
<dbReference type="InterPro" id="IPR020667">
    <property type="entry name" value="DNA_mismatch_repair_MutL"/>
</dbReference>
<dbReference type="InterPro" id="IPR013507">
    <property type="entry name" value="DNA_mismatch_S5_2-like"/>
</dbReference>
<dbReference type="InterPro" id="IPR036890">
    <property type="entry name" value="HATPase_C_sf"/>
</dbReference>
<dbReference type="InterPro" id="IPR002099">
    <property type="entry name" value="MutL/Mlh/PMS"/>
</dbReference>
<dbReference type="InterPro" id="IPR038973">
    <property type="entry name" value="MutL/Mlh/Pms-like"/>
</dbReference>
<dbReference type="InterPro" id="IPR014790">
    <property type="entry name" value="MutL_C"/>
</dbReference>
<dbReference type="InterPro" id="IPR042120">
    <property type="entry name" value="MutL_C_dimsub"/>
</dbReference>
<dbReference type="InterPro" id="IPR042121">
    <property type="entry name" value="MutL_C_regsub"/>
</dbReference>
<dbReference type="InterPro" id="IPR037198">
    <property type="entry name" value="MutL_C_sf"/>
</dbReference>
<dbReference type="InterPro" id="IPR020568">
    <property type="entry name" value="Ribosomal_Su5_D2-typ_SF"/>
</dbReference>
<dbReference type="InterPro" id="IPR014721">
    <property type="entry name" value="Ribsml_uS5_D2-typ_fold_subgr"/>
</dbReference>
<dbReference type="NCBIfam" id="TIGR00585">
    <property type="entry name" value="mutl"/>
    <property type="match status" value="1"/>
</dbReference>
<dbReference type="PANTHER" id="PTHR10073">
    <property type="entry name" value="DNA MISMATCH REPAIR PROTEIN MLH, PMS, MUTL"/>
    <property type="match status" value="1"/>
</dbReference>
<dbReference type="PANTHER" id="PTHR10073:SF12">
    <property type="entry name" value="DNA MISMATCH REPAIR PROTEIN MLH1"/>
    <property type="match status" value="1"/>
</dbReference>
<dbReference type="Pfam" id="PF01119">
    <property type="entry name" value="DNA_mis_repair"/>
    <property type="match status" value="1"/>
</dbReference>
<dbReference type="Pfam" id="PF13589">
    <property type="entry name" value="HATPase_c_3"/>
    <property type="match status" value="1"/>
</dbReference>
<dbReference type="Pfam" id="PF08676">
    <property type="entry name" value="MutL_C"/>
    <property type="match status" value="1"/>
</dbReference>
<dbReference type="SMART" id="SM01340">
    <property type="entry name" value="DNA_mis_repair"/>
    <property type="match status" value="1"/>
</dbReference>
<dbReference type="SMART" id="SM00853">
    <property type="entry name" value="MutL_C"/>
    <property type="match status" value="1"/>
</dbReference>
<dbReference type="SUPFAM" id="SSF55874">
    <property type="entry name" value="ATPase domain of HSP90 chaperone/DNA topoisomerase II/histidine kinase"/>
    <property type="match status" value="1"/>
</dbReference>
<dbReference type="SUPFAM" id="SSF118116">
    <property type="entry name" value="DNA mismatch repair protein MutL"/>
    <property type="match status" value="1"/>
</dbReference>
<dbReference type="SUPFAM" id="SSF54211">
    <property type="entry name" value="Ribosomal protein S5 domain 2-like"/>
    <property type="match status" value="1"/>
</dbReference>
<dbReference type="PROSITE" id="PS00058">
    <property type="entry name" value="DNA_MISMATCH_REPAIR_1"/>
    <property type="match status" value="1"/>
</dbReference>
<proteinExistence type="inferred from homology"/>
<feature type="chain" id="PRO_1000010037" description="DNA mismatch repair protein MutL">
    <location>
        <begin position="1"/>
        <end position="596"/>
    </location>
</feature>
<comment type="function">
    <text evidence="1">This protein is involved in the repair of mismatches in DNA. It is required for dam-dependent methyl-directed DNA mismatch repair. May act as a 'molecular matchmaker', a protein that promotes the formation of a stable complex between two or more DNA-binding proteins in an ATP-dependent manner without itself being part of a final effector complex.</text>
</comment>
<comment type="similarity">
    <text evidence="1">Belongs to the DNA mismatch repair MutL/HexB family.</text>
</comment>
<organism>
    <name type="scientific">Leptospira borgpetersenii serovar Hardjo-bovis (strain JB197)</name>
    <dbReference type="NCBI Taxonomy" id="355277"/>
    <lineage>
        <taxon>Bacteria</taxon>
        <taxon>Pseudomonadati</taxon>
        <taxon>Spirochaetota</taxon>
        <taxon>Spirochaetia</taxon>
        <taxon>Leptospirales</taxon>
        <taxon>Leptospiraceae</taxon>
        <taxon>Leptospira</taxon>
    </lineage>
</organism>
<protein>
    <recommendedName>
        <fullName evidence="1">DNA mismatch repair protein MutL</fullName>
    </recommendedName>
</protein>
<evidence type="ECO:0000255" key="1">
    <source>
        <dbReference type="HAMAP-Rule" id="MF_00149"/>
    </source>
</evidence>
<sequence>MGKIQELSPELINQIAAGEVIESAHSVVKELMENSMDAGATQMDIESKDGGLSLLRITDNGSGIDPEDIEPALKRHATSKIRDYGDLENVLSYGFRGEALASIASVSRLTLESGIKNQKTAWKICSIGGKISEKEEIPGFVGTKILVEELFFNTPVRRKFLKSVRSEDKKIRDRVTTQALARHDVRFRLFQDGKEVFVLPSRENKKDRIVDLFGENFRDHLLEVSLERGGLNATGYISDPDFYKSNRTGQFVFVNGRPVEIKYGSTLLKKAYDELLPPNGHPYCFLFFEIDPSRVDVNVHPAKKEIRFLDEEGFNGFFLTLIQKELRSSTPVSFLELKKRLLRPTPETFKTSSLYQAHSSSRSGESPLLSRELFTEVPRQEGFDLDRMGPGASLSALTDNVVKHSSFVPKKHFGVLFETFILAEAEDGFCIIDQHTAHERIRYEEVLRKLEKKNYGIQPLLTPIRIDVSKQEQEDILNRKKEYEEVGIFLDPLGEDSVVLREIPAYMEPGEEKEIILDFLNRTEGKETTEPELYDLMAKCVACRSAIKKGDHLSDPILAEILNRLSYCENPSRCPHGRPTLVKLSRDDLERMFHRK</sequence>
<keyword id="KW-0227">DNA damage</keyword>
<keyword id="KW-0234">DNA repair</keyword>
<reference key="1">
    <citation type="journal article" date="2006" name="Proc. Natl. Acad. Sci. U.S.A.">
        <title>Genome reduction in Leptospira borgpetersenii reflects limited transmission potential.</title>
        <authorList>
            <person name="Bulach D.M."/>
            <person name="Zuerner R.L."/>
            <person name="Wilson P."/>
            <person name="Seemann T."/>
            <person name="McGrath A."/>
            <person name="Cullen P.A."/>
            <person name="Davis J."/>
            <person name="Johnson M."/>
            <person name="Kuczek E."/>
            <person name="Alt D.P."/>
            <person name="Peterson-Burch B."/>
            <person name="Coppel R.L."/>
            <person name="Rood J.I."/>
            <person name="Davies J.K."/>
            <person name="Adler B."/>
        </authorList>
    </citation>
    <scope>NUCLEOTIDE SEQUENCE [LARGE SCALE GENOMIC DNA]</scope>
    <source>
        <strain>JB197</strain>
    </source>
</reference>
<gene>
    <name evidence="1" type="primary">mutL</name>
    <name type="ordered locus">LBJ_2225</name>
</gene>
<name>MUTL_LEPBJ</name>
<accession>Q04QW2</accession>